<evidence type="ECO:0000255" key="1">
    <source>
        <dbReference type="HAMAP-Rule" id="MF_00127"/>
    </source>
</evidence>
<evidence type="ECO:0000256" key="2">
    <source>
        <dbReference type="SAM" id="MobiDB-lite"/>
    </source>
</evidence>
<comment type="catalytic activity">
    <reaction evidence="1">
        <text>tRNA(His) + L-histidine + ATP = L-histidyl-tRNA(His) + AMP + diphosphate + H(+)</text>
        <dbReference type="Rhea" id="RHEA:17313"/>
        <dbReference type="Rhea" id="RHEA-COMP:9665"/>
        <dbReference type="Rhea" id="RHEA-COMP:9689"/>
        <dbReference type="ChEBI" id="CHEBI:15378"/>
        <dbReference type="ChEBI" id="CHEBI:30616"/>
        <dbReference type="ChEBI" id="CHEBI:33019"/>
        <dbReference type="ChEBI" id="CHEBI:57595"/>
        <dbReference type="ChEBI" id="CHEBI:78442"/>
        <dbReference type="ChEBI" id="CHEBI:78527"/>
        <dbReference type="ChEBI" id="CHEBI:456215"/>
        <dbReference type="EC" id="6.1.1.21"/>
    </reaction>
</comment>
<comment type="subcellular location">
    <subcellularLocation>
        <location evidence="1">Cytoplasm</location>
    </subcellularLocation>
</comment>
<comment type="similarity">
    <text evidence="1">Belongs to the class-II aminoacyl-tRNA synthetase family.</text>
</comment>
<accession>B9LRS2</accession>
<name>SYH_HALLT</name>
<keyword id="KW-0030">Aminoacyl-tRNA synthetase</keyword>
<keyword id="KW-0067">ATP-binding</keyword>
<keyword id="KW-0963">Cytoplasm</keyword>
<keyword id="KW-0436">Ligase</keyword>
<keyword id="KW-0547">Nucleotide-binding</keyword>
<keyword id="KW-0648">Protein biosynthesis</keyword>
<keyword id="KW-1185">Reference proteome</keyword>
<gene>
    <name evidence="1" type="primary">hisS</name>
    <name type="ordered locus">Hlac_2219</name>
</gene>
<organism>
    <name type="scientific">Halorubrum lacusprofundi (strain ATCC 49239 / DSM 5036 / JCM 8891 / ACAM 34)</name>
    <dbReference type="NCBI Taxonomy" id="416348"/>
    <lineage>
        <taxon>Archaea</taxon>
        <taxon>Methanobacteriati</taxon>
        <taxon>Methanobacteriota</taxon>
        <taxon>Stenosarchaea group</taxon>
        <taxon>Halobacteria</taxon>
        <taxon>Halobacteriales</taxon>
        <taxon>Haloferacaceae</taxon>
        <taxon>Halorubrum</taxon>
    </lineage>
</organism>
<proteinExistence type="inferred from homology"/>
<reference key="1">
    <citation type="journal article" date="2016" name="Stand. Genomic Sci.">
        <title>Complete genome sequence of the Antarctic Halorubrum lacusprofundi type strain ACAM 34.</title>
        <authorList>
            <person name="Anderson I.J."/>
            <person name="DasSarma P."/>
            <person name="Lucas S."/>
            <person name="Copeland A."/>
            <person name="Lapidus A."/>
            <person name="Del Rio T.G."/>
            <person name="Tice H."/>
            <person name="Dalin E."/>
            <person name="Bruce D.C."/>
            <person name="Goodwin L."/>
            <person name="Pitluck S."/>
            <person name="Sims D."/>
            <person name="Brettin T.S."/>
            <person name="Detter J.C."/>
            <person name="Han C.S."/>
            <person name="Larimer F."/>
            <person name="Hauser L."/>
            <person name="Land M."/>
            <person name="Ivanova N."/>
            <person name="Richardson P."/>
            <person name="Cavicchioli R."/>
            <person name="DasSarma S."/>
            <person name="Woese C.R."/>
            <person name="Kyrpides N.C."/>
        </authorList>
    </citation>
    <scope>NUCLEOTIDE SEQUENCE [LARGE SCALE GENOMIC DNA]</scope>
    <source>
        <strain>ATCC 49239 / DSM 5036 / JCM 8891 / ACAM 34</strain>
    </source>
</reference>
<feature type="chain" id="PRO_1000199167" description="Histidine--tRNA ligase">
    <location>
        <begin position="1"/>
        <end position="442"/>
    </location>
</feature>
<feature type="region of interest" description="Disordered" evidence="2">
    <location>
        <begin position="416"/>
        <end position="442"/>
    </location>
</feature>
<feature type="compositionally biased region" description="Acidic residues" evidence="2">
    <location>
        <begin position="427"/>
        <end position="442"/>
    </location>
</feature>
<sequence>MYDGLKGFRDFYPGEQSARREVTDAIEDAASRYGFREIATPALERTEMYVDKSGEEIVEELYAFEDKGGRGVSMTPELTPTVARMVVAKGQELSKPIKWMSTRPFWRYEQVQQGRFREFYQTNIDVFGSSAPEADAEVLAVAADALTDLGLTNDDFEFRVSHRDILGGLVRALAADPDAVDTKAAIRAVDKRAKVDDGEYLGLLSDAGLDRATAQEFDDLISDVETVDDLDAVAEAGGEDVEAAVENLRNVLAAADDFGAGAFCEVSLTTARGLDYYTGVVFECFDSTGEVSRSVFGGGRYDDLIESFGGQPTPAVGVAPGHAPLSLLCQRAGVWPDEELTTDYYVLSVGDTRSEATALARDLRALGDDVVVEQDVSGRSFGAQLGYADSINAETVVVVGERDLENGEYTVKDMASGDETTVPVEEFPPEGGEELPTYEDYE</sequence>
<protein>
    <recommendedName>
        <fullName evidence="1">Histidine--tRNA ligase</fullName>
        <ecNumber evidence="1">6.1.1.21</ecNumber>
    </recommendedName>
    <alternativeName>
        <fullName evidence="1">Histidyl-tRNA synthetase</fullName>
        <shortName evidence="1">HisRS</shortName>
    </alternativeName>
</protein>
<dbReference type="EC" id="6.1.1.21" evidence="1"/>
<dbReference type="EMBL" id="CP001365">
    <property type="protein sequence ID" value="ACM57796.1"/>
    <property type="molecule type" value="Genomic_DNA"/>
</dbReference>
<dbReference type="RefSeq" id="WP_015910917.1">
    <property type="nucleotide sequence ID" value="NC_012029.1"/>
</dbReference>
<dbReference type="SMR" id="B9LRS2"/>
<dbReference type="GeneID" id="7401154"/>
<dbReference type="KEGG" id="hla:Hlac_2219"/>
<dbReference type="eggNOG" id="arCOG00404">
    <property type="taxonomic scope" value="Archaea"/>
</dbReference>
<dbReference type="HOGENOM" id="CLU_025113_3_1_2"/>
<dbReference type="Proteomes" id="UP000000740">
    <property type="component" value="Chromosome 1"/>
</dbReference>
<dbReference type="GO" id="GO:0005737">
    <property type="term" value="C:cytoplasm"/>
    <property type="evidence" value="ECO:0007669"/>
    <property type="project" value="UniProtKB-SubCell"/>
</dbReference>
<dbReference type="GO" id="GO:0005524">
    <property type="term" value="F:ATP binding"/>
    <property type="evidence" value="ECO:0007669"/>
    <property type="project" value="UniProtKB-UniRule"/>
</dbReference>
<dbReference type="GO" id="GO:0004821">
    <property type="term" value="F:histidine-tRNA ligase activity"/>
    <property type="evidence" value="ECO:0007669"/>
    <property type="project" value="UniProtKB-UniRule"/>
</dbReference>
<dbReference type="GO" id="GO:0006427">
    <property type="term" value="P:histidyl-tRNA aminoacylation"/>
    <property type="evidence" value="ECO:0007669"/>
    <property type="project" value="UniProtKB-UniRule"/>
</dbReference>
<dbReference type="CDD" id="cd00773">
    <property type="entry name" value="HisRS-like_core"/>
    <property type="match status" value="1"/>
</dbReference>
<dbReference type="Gene3D" id="3.40.50.800">
    <property type="entry name" value="Anticodon-binding domain"/>
    <property type="match status" value="1"/>
</dbReference>
<dbReference type="Gene3D" id="3.30.930.10">
    <property type="entry name" value="Bira Bifunctional Protein, Domain 2"/>
    <property type="match status" value="1"/>
</dbReference>
<dbReference type="HAMAP" id="MF_00127">
    <property type="entry name" value="His_tRNA_synth"/>
    <property type="match status" value="1"/>
</dbReference>
<dbReference type="InterPro" id="IPR006195">
    <property type="entry name" value="aa-tRNA-synth_II"/>
</dbReference>
<dbReference type="InterPro" id="IPR045864">
    <property type="entry name" value="aa-tRNA-synth_II/BPL/LPL"/>
</dbReference>
<dbReference type="InterPro" id="IPR004154">
    <property type="entry name" value="Anticodon-bd"/>
</dbReference>
<dbReference type="InterPro" id="IPR036621">
    <property type="entry name" value="Anticodon-bd_dom_sf"/>
</dbReference>
<dbReference type="InterPro" id="IPR015807">
    <property type="entry name" value="His-tRNA-ligase"/>
</dbReference>
<dbReference type="InterPro" id="IPR041715">
    <property type="entry name" value="HisRS-like_core"/>
</dbReference>
<dbReference type="InterPro" id="IPR004516">
    <property type="entry name" value="HisRS/HisZ"/>
</dbReference>
<dbReference type="NCBIfam" id="TIGR00442">
    <property type="entry name" value="hisS"/>
    <property type="match status" value="1"/>
</dbReference>
<dbReference type="PANTHER" id="PTHR43707:SF1">
    <property type="entry name" value="HISTIDINE--TRNA LIGASE, MITOCHONDRIAL-RELATED"/>
    <property type="match status" value="1"/>
</dbReference>
<dbReference type="PANTHER" id="PTHR43707">
    <property type="entry name" value="HISTIDYL-TRNA SYNTHETASE"/>
    <property type="match status" value="1"/>
</dbReference>
<dbReference type="Pfam" id="PF03129">
    <property type="entry name" value="HGTP_anticodon"/>
    <property type="match status" value="1"/>
</dbReference>
<dbReference type="Pfam" id="PF13393">
    <property type="entry name" value="tRNA-synt_His"/>
    <property type="match status" value="1"/>
</dbReference>
<dbReference type="PIRSF" id="PIRSF001549">
    <property type="entry name" value="His-tRNA_synth"/>
    <property type="match status" value="1"/>
</dbReference>
<dbReference type="SUPFAM" id="SSF52954">
    <property type="entry name" value="Class II aaRS ABD-related"/>
    <property type="match status" value="1"/>
</dbReference>
<dbReference type="SUPFAM" id="SSF55681">
    <property type="entry name" value="Class II aaRS and biotin synthetases"/>
    <property type="match status" value="1"/>
</dbReference>
<dbReference type="PROSITE" id="PS50862">
    <property type="entry name" value="AA_TRNA_LIGASE_II"/>
    <property type="match status" value="1"/>
</dbReference>